<accession>A5IJ98</accession>
<keyword id="KW-0067">ATP-binding</keyword>
<keyword id="KW-0963">Cytoplasm</keyword>
<keyword id="KW-0324">Glycolysis</keyword>
<keyword id="KW-0418">Kinase</keyword>
<keyword id="KW-0547">Nucleotide-binding</keyword>
<keyword id="KW-0808">Transferase</keyword>
<feature type="chain" id="PRO_1000058086" description="Phosphoglycerate kinase">
    <location>
        <begin position="1"/>
        <end position="399"/>
    </location>
</feature>
<feature type="binding site" evidence="1">
    <location>
        <begin position="21"/>
        <end position="23"/>
    </location>
    <ligand>
        <name>substrate</name>
    </ligand>
</feature>
<feature type="binding site" evidence="1">
    <location>
        <position position="36"/>
    </location>
    <ligand>
        <name>substrate</name>
    </ligand>
</feature>
<feature type="binding site" evidence="1">
    <location>
        <begin position="59"/>
        <end position="62"/>
    </location>
    <ligand>
        <name>substrate</name>
    </ligand>
</feature>
<feature type="binding site" evidence="1">
    <location>
        <position position="118"/>
    </location>
    <ligand>
        <name>substrate</name>
    </ligand>
</feature>
<feature type="binding site" evidence="1">
    <location>
        <position position="151"/>
    </location>
    <ligand>
        <name>substrate</name>
    </ligand>
</feature>
<feature type="binding site" evidence="1">
    <location>
        <position position="201"/>
    </location>
    <ligand>
        <name>ATP</name>
        <dbReference type="ChEBI" id="CHEBI:30616"/>
    </ligand>
</feature>
<feature type="binding site" evidence="1">
    <location>
        <position position="293"/>
    </location>
    <ligand>
        <name>ATP</name>
        <dbReference type="ChEBI" id="CHEBI:30616"/>
    </ligand>
</feature>
<feature type="binding site" evidence="1">
    <location>
        <position position="324"/>
    </location>
    <ligand>
        <name>ATP</name>
        <dbReference type="ChEBI" id="CHEBI:30616"/>
    </ligand>
</feature>
<feature type="binding site" evidence="1">
    <location>
        <begin position="353"/>
        <end position="356"/>
    </location>
    <ligand>
        <name>ATP</name>
        <dbReference type="ChEBI" id="CHEBI:30616"/>
    </ligand>
</feature>
<organism>
    <name type="scientific">Thermotoga petrophila (strain ATCC BAA-488 / DSM 13995 / JCM 10881 / RKU-1)</name>
    <dbReference type="NCBI Taxonomy" id="390874"/>
    <lineage>
        <taxon>Bacteria</taxon>
        <taxon>Thermotogati</taxon>
        <taxon>Thermotogota</taxon>
        <taxon>Thermotogae</taxon>
        <taxon>Thermotogales</taxon>
        <taxon>Thermotogaceae</taxon>
        <taxon>Thermotoga</taxon>
    </lineage>
</organism>
<protein>
    <recommendedName>
        <fullName evidence="1">Phosphoglycerate kinase</fullName>
        <ecNumber evidence="1">2.7.2.3</ecNumber>
    </recommendedName>
</protein>
<name>PGK_THEP1</name>
<sequence length="399" mass="43102">MEKMTIKDVDLKGKRVIMRVDFNVPVKDGVVQDDTRIRAALPTIKYALEQGAKVILLSHLGRPKGEPSPEFSLAPVAKRLSELLGKEVKFVPAVVGDEVKKAVEELKEGEVLLLENTRFHPGETKNDPELAKFWASLADIHVNDAFGTAHRAHASNVGIAQFIPSVAGFLMEKEIKFLSKVTYNPEKPYVVVLGGAKVSDKIGVITNLMEKADRILIGGAMMFTFLKALGKEVGSSRVEEDKIDLAKELLEKAKEKGVEIVLPVDTVIAQKIEPGVEKKVVRIDDGIPEGWMGLDIGPETVELFKQKLSDAKTVVWNGPMGVFEIDDFAEGTKQVALAIAALTEKGAITVVGGGDSAAAVNKFGLEDRFSHVSTGGGASLEFLEGKELPGIASIADKKK</sequence>
<gene>
    <name evidence="1" type="primary">pgk</name>
    <name type="ordered locus">Tpet_0242</name>
</gene>
<proteinExistence type="inferred from homology"/>
<comment type="catalytic activity">
    <reaction evidence="1">
        <text>(2R)-3-phosphoglycerate + ATP = (2R)-3-phospho-glyceroyl phosphate + ADP</text>
        <dbReference type="Rhea" id="RHEA:14801"/>
        <dbReference type="ChEBI" id="CHEBI:30616"/>
        <dbReference type="ChEBI" id="CHEBI:57604"/>
        <dbReference type="ChEBI" id="CHEBI:58272"/>
        <dbReference type="ChEBI" id="CHEBI:456216"/>
        <dbReference type="EC" id="2.7.2.3"/>
    </reaction>
</comment>
<comment type="pathway">
    <text evidence="1">Carbohydrate degradation; glycolysis; pyruvate from D-glyceraldehyde 3-phosphate: step 2/5.</text>
</comment>
<comment type="subunit">
    <text evidence="1">Monomer.</text>
</comment>
<comment type="subcellular location">
    <subcellularLocation>
        <location evidence="1">Cytoplasm</location>
    </subcellularLocation>
</comment>
<comment type="similarity">
    <text evidence="1">Belongs to the phosphoglycerate kinase family.</text>
</comment>
<dbReference type="EC" id="2.7.2.3" evidence="1"/>
<dbReference type="EMBL" id="CP000702">
    <property type="protein sequence ID" value="ABQ46271.1"/>
    <property type="molecule type" value="Genomic_DNA"/>
</dbReference>
<dbReference type="RefSeq" id="WP_011942914.1">
    <property type="nucleotide sequence ID" value="NC_009486.1"/>
</dbReference>
<dbReference type="SMR" id="A5IJ98"/>
<dbReference type="STRING" id="390874.Tpet_0242"/>
<dbReference type="KEGG" id="tpt:Tpet_0242"/>
<dbReference type="eggNOG" id="COG0126">
    <property type="taxonomic scope" value="Bacteria"/>
</dbReference>
<dbReference type="HOGENOM" id="CLU_025427_0_2_0"/>
<dbReference type="UniPathway" id="UPA00109">
    <property type="reaction ID" value="UER00185"/>
</dbReference>
<dbReference type="Proteomes" id="UP000006558">
    <property type="component" value="Chromosome"/>
</dbReference>
<dbReference type="GO" id="GO:0005829">
    <property type="term" value="C:cytosol"/>
    <property type="evidence" value="ECO:0007669"/>
    <property type="project" value="TreeGrafter"/>
</dbReference>
<dbReference type="GO" id="GO:0043531">
    <property type="term" value="F:ADP binding"/>
    <property type="evidence" value="ECO:0007669"/>
    <property type="project" value="TreeGrafter"/>
</dbReference>
<dbReference type="GO" id="GO:0005524">
    <property type="term" value="F:ATP binding"/>
    <property type="evidence" value="ECO:0007669"/>
    <property type="project" value="UniProtKB-KW"/>
</dbReference>
<dbReference type="GO" id="GO:0004618">
    <property type="term" value="F:phosphoglycerate kinase activity"/>
    <property type="evidence" value="ECO:0007669"/>
    <property type="project" value="UniProtKB-UniRule"/>
</dbReference>
<dbReference type="GO" id="GO:0006094">
    <property type="term" value="P:gluconeogenesis"/>
    <property type="evidence" value="ECO:0007669"/>
    <property type="project" value="TreeGrafter"/>
</dbReference>
<dbReference type="GO" id="GO:0006096">
    <property type="term" value="P:glycolytic process"/>
    <property type="evidence" value="ECO:0007669"/>
    <property type="project" value="UniProtKB-UniRule"/>
</dbReference>
<dbReference type="CDD" id="cd00318">
    <property type="entry name" value="Phosphoglycerate_kinase"/>
    <property type="match status" value="1"/>
</dbReference>
<dbReference type="FunFam" id="3.40.50.1260:FF:000007">
    <property type="entry name" value="Phosphoglycerate kinase"/>
    <property type="match status" value="1"/>
</dbReference>
<dbReference type="FunFam" id="3.40.50.1260:FF:000008">
    <property type="entry name" value="Phosphoglycerate kinase"/>
    <property type="match status" value="1"/>
</dbReference>
<dbReference type="Gene3D" id="3.40.50.1260">
    <property type="entry name" value="Phosphoglycerate kinase, N-terminal domain"/>
    <property type="match status" value="2"/>
</dbReference>
<dbReference type="HAMAP" id="MF_00145">
    <property type="entry name" value="Phosphoglyc_kinase"/>
    <property type="match status" value="1"/>
</dbReference>
<dbReference type="InterPro" id="IPR001576">
    <property type="entry name" value="Phosphoglycerate_kinase"/>
</dbReference>
<dbReference type="InterPro" id="IPR015911">
    <property type="entry name" value="Phosphoglycerate_kinase_CS"/>
</dbReference>
<dbReference type="InterPro" id="IPR015824">
    <property type="entry name" value="Phosphoglycerate_kinase_N"/>
</dbReference>
<dbReference type="InterPro" id="IPR036043">
    <property type="entry name" value="Phosphoglycerate_kinase_sf"/>
</dbReference>
<dbReference type="PANTHER" id="PTHR11406">
    <property type="entry name" value="PHOSPHOGLYCERATE KINASE"/>
    <property type="match status" value="1"/>
</dbReference>
<dbReference type="PANTHER" id="PTHR11406:SF23">
    <property type="entry name" value="PHOSPHOGLYCERATE KINASE 1, CHLOROPLASTIC-RELATED"/>
    <property type="match status" value="1"/>
</dbReference>
<dbReference type="Pfam" id="PF00162">
    <property type="entry name" value="PGK"/>
    <property type="match status" value="1"/>
</dbReference>
<dbReference type="PIRSF" id="PIRSF000724">
    <property type="entry name" value="Pgk"/>
    <property type="match status" value="1"/>
</dbReference>
<dbReference type="PRINTS" id="PR00477">
    <property type="entry name" value="PHGLYCKINASE"/>
</dbReference>
<dbReference type="SUPFAM" id="SSF53748">
    <property type="entry name" value="Phosphoglycerate kinase"/>
    <property type="match status" value="1"/>
</dbReference>
<dbReference type="PROSITE" id="PS00111">
    <property type="entry name" value="PGLYCERATE_KINASE"/>
    <property type="match status" value="1"/>
</dbReference>
<evidence type="ECO:0000255" key="1">
    <source>
        <dbReference type="HAMAP-Rule" id="MF_00145"/>
    </source>
</evidence>
<reference key="1">
    <citation type="submission" date="2007-05" db="EMBL/GenBank/DDBJ databases">
        <title>Complete sequence of Thermotoga petrophila RKU-1.</title>
        <authorList>
            <consortium name="US DOE Joint Genome Institute"/>
            <person name="Copeland A."/>
            <person name="Lucas S."/>
            <person name="Lapidus A."/>
            <person name="Barry K."/>
            <person name="Glavina del Rio T."/>
            <person name="Dalin E."/>
            <person name="Tice H."/>
            <person name="Pitluck S."/>
            <person name="Sims D."/>
            <person name="Brettin T."/>
            <person name="Bruce D."/>
            <person name="Detter J.C."/>
            <person name="Han C."/>
            <person name="Tapia R."/>
            <person name="Schmutz J."/>
            <person name="Larimer F."/>
            <person name="Land M."/>
            <person name="Hauser L."/>
            <person name="Kyrpides N."/>
            <person name="Mikhailova N."/>
            <person name="Nelson K."/>
            <person name="Gogarten J.P."/>
            <person name="Noll K."/>
            <person name="Richardson P."/>
        </authorList>
    </citation>
    <scope>NUCLEOTIDE SEQUENCE [LARGE SCALE GENOMIC DNA]</scope>
    <source>
        <strain>ATCC BAA-488 / DSM 13995 / JCM 10881 / RKU-1</strain>
    </source>
</reference>